<reference key="1">
    <citation type="journal article" date="2002" name="Lancet">
        <title>Genome and virulence determinants of high virulence community-acquired MRSA.</title>
        <authorList>
            <person name="Baba T."/>
            <person name="Takeuchi F."/>
            <person name="Kuroda M."/>
            <person name="Yuzawa H."/>
            <person name="Aoki K."/>
            <person name="Oguchi A."/>
            <person name="Nagai Y."/>
            <person name="Iwama N."/>
            <person name="Asano K."/>
            <person name="Naimi T."/>
            <person name="Kuroda H."/>
            <person name="Cui L."/>
            <person name="Yamamoto K."/>
            <person name="Hiramatsu K."/>
        </authorList>
    </citation>
    <scope>NUCLEOTIDE SEQUENCE [LARGE SCALE GENOMIC DNA]</scope>
    <source>
        <strain>MW2</strain>
    </source>
</reference>
<protein>
    <recommendedName>
        <fullName evidence="2">Type VII secretion system protein EssB</fullName>
    </recommendedName>
</protein>
<name>ESSB_STAAW</name>
<sequence length="444" mass="52024">MVKNHNPKNEMQDMLTPLDAEEAAKTKLRLDMREIPKSSIKPEHFHLMYLLEQHSPYFIDAELTELRDSFQIHYDINDNHTPFDNIKSFTKNEKLRYLLNIKNLEEVNRTRYTFVLAPDELFFTRDGLPIAKTRGLQNVVDPLPVSEAEFLTRYKALVICAFNEKQSFDALVEGNLELHKGTPFETKVIEAATLDLLTAFLDEQYQKQEQDYSQNYAYVRKVGHTVFKWVAIGMTTLSVLLIAFLAFLYFSVMKHNERIEKGYQAFVKDDYTQVLNTYDDLDGKKLDKEALYIYAKSYIQTNKQGLEKDKKENLLNNVTPNSNKDYLLYWMELGQGHLDEAINIATYLDDNDITKLALINKLNEIKNNGDLSNDKRSEETKKYNDKLQDILDKEKQVKDEKAKSEEEKAKAKDEKLKQQEENEKKQKEQAQKDKEKRQEAERKK</sequence>
<organism>
    <name type="scientific">Staphylococcus aureus (strain MW2)</name>
    <dbReference type="NCBI Taxonomy" id="196620"/>
    <lineage>
        <taxon>Bacteria</taxon>
        <taxon>Bacillati</taxon>
        <taxon>Bacillota</taxon>
        <taxon>Bacilli</taxon>
        <taxon>Bacillales</taxon>
        <taxon>Staphylococcaceae</taxon>
        <taxon>Staphylococcus</taxon>
    </lineage>
</organism>
<gene>
    <name evidence="2" type="primary">essB</name>
    <name type="ordered locus">MW0262</name>
</gene>
<accession>Q7A1V2</accession>
<keyword id="KW-1003">Cell membrane</keyword>
<keyword id="KW-0175">Coiled coil</keyword>
<keyword id="KW-0472">Membrane</keyword>
<keyword id="KW-0812">Transmembrane</keyword>
<keyword id="KW-1133">Transmembrane helix</keyword>
<keyword id="KW-0843">Virulence</keyword>
<comment type="function">
    <text evidence="1">Component of the type VII secretion system (Ess). Required for the secretion of EsxA and EsxB.</text>
</comment>
<comment type="subcellular location">
    <subcellularLocation>
        <location evidence="2">Cell membrane</location>
        <topology evidence="3">Single-pass membrane protein</topology>
    </subcellularLocation>
</comment>
<comment type="similarity">
    <text evidence="5">Belongs to the EssB family.</text>
</comment>
<proteinExistence type="inferred from homology"/>
<feature type="chain" id="PRO_0000087068" description="Type VII secretion system protein EssB">
    <location>
        <begin position="1"/>
        <end position="444"/>
    </location>
</feature>
<feature type="topological domain" description="Cytoplasmic" evidence="2">
    <location>
        <begin position="1"/>
        <end position="229"/>
    </location>
</feature>
<feature type="transmembrane region" description="Helical" evidence="3">
    <location>
        <begin position="230"/>
        <end position="250"/>
    </location>
</feature>
<feature type="topological domain" description="Extracellular" evidence="2">
    <location>
        <begin position="251"/>
        <end position="444"/>
    </location>
</feature>
<feature type="region of interest" description="Disordered" evidence="4">
    <location>
        <begin position="366"/>
        <end position="444"/>
    </location>
</feature>
<feature type="coiled-coil region" evidence="3">
    <location>
        <begin position="387"/>
        <end position="443"/>
    </location>
</feature>
<feature type="compositionally biased region" description="Basic and acidic residues" evidence="4">
    <location>
        <begin position="372"/>
        <end position="444"/>
    </location>
</feature>
<evidence type="ECO:0000250" key="1">
    <source>
        <dbReference type="UniProtKB" id="P0C053"/>
    </source>
</evidence>
<evidence type="ECO:0000250" key="2">
    <source>
        <dbReference type="UniProtKB" id="Q2G185"/>
    </source>
</evidence>
<evidence type="ECO:0000255" key="3"/>
<evidence type="ECO:0000256" key="4">
    <source>
        <dbReference type="SAM" id="MobiDB-lite"/>
    </source>
</evidence>
<evidence type="ECO:0000305" key="5"/>
<dbReference type="EMBL" id="BA000033">
    <property type="protein sequence ID" value="BAB94127.1"/>
    <property type="molecule type" value="Genomic_DNA"/>
</dbReference>
<dbReference type="RefSeq" id="WP_000240338.1">
    <property type="nucleotide sequence ID" value="NC_003923.1"/>
</dbReference>
<dbReference type="SMR" id="Q7A1V2"/>
<dbReference type="KEGG" id="sam:MW0262"/>
<dbReference type="HOGENOM" id="CLU_049737_0_0_9"/>
<dbReference type="GO" id="GO:0005886">
    <property type="term" value="C:plasma membrane"/>
    <property type="evidence" value="ECO:0007669"/>
    <property type="project" value="UniProtKB-SubCell"/>
</dbReference>
<dbReference type="Gene3D" id="1.10.510.10">
    <property type="entry name" value="Transferase(Phosphotransferase) domain 1"/>
    <property type="match status" value="1"/>
</dbReference>
<dbReference type="Gene3D" id="1.25.40.680">
    <property type="entry name" value="Type VII secretion system EssB, C-terminal-like domain"/>
    <property type="match status" value="1"/>
</dbReference>
<dbReference type="InterPro" id="IPR018778">
    <property type="entry name" value="T7SS_EssB"/>
</dbReference>
<dbReference type="InterPro" id="IPR042565">
    <property type="entry name" value="T7SS_EssB_C"/>
</dbReference>
<dbReference type="NCBIfam" id="TIGR03926">
    <property type="entry name" value="T7_EssB"/>
    <property type="match status" value="1"/>
</dbReference>
<dbReference type="Pfam" id="PF10140">
    <property type="entry name" value="YukC"/>
    <property type="match status" value="1"/>
</dbReference>